<feature type="chain" id="PRO_0000405832" description="Lethal(3)malignant brain tumor-like protein 1">
    <location>
        <begin position="1"/>
        <end position="826"/>
    </location>
</feature>
<feature type="repeat" description="MBT 1">
    <location>
        <begin position="280"/>
        <end position="380"/>
    </location>
</feature>
<feature type="repeat" description="MBT 2">
    <location>
        <begin position="388"/>
        <end position="487"/>
    </location>
</feature>
<feature type="repeat" description="MBT 3">
    <location>
        <begin position="496"/>
        <end position="591"/>
    </location>
</feature>
<feature type="domain" description="SAM" evidence="3">
    <location>
        <begin position="757"/>
        <end position="821"/>
    </location>
</feature>
<feature type="zinc finger region" description="CCHHC-type" evidence="4">
    <location>
        <begin position="619"/>
        <end position="662"/>
    </location>
</feature>
<feature type="region of interest" description="Disordered" evidence="5">
    <location>
        <begin position="134"/>
        <end position="155"/>
    </location>
</feature>
<feature type="region of interest" description="Disordered" evidence="5">
    <location>
        <begin position="220"/>
        <end position="272"/>
    </location>
</feature>
<feature type="region of interest" description="Interaction with monomethylated and dimethylated peptides" evidence="1">
    <location>
        <begin position="453"/>
        <end position="460"/>
    </location>
</feature>
<feature type="region of interest" description="Disordered" evidence="5">
    <location>
        <begin position="586"/>
        <end position="623"/>
    </location>
</feature>
<feature type="region of interest" description="Disordered" evidence="5">
    <location>
        <begin position="663"/>
        <end position="705"/>
    </location>
</feature>
<feature type="compositionally biased region" description="Basic and acidic residues" evidence="5">
    <location>
        <begin position="242"/>
        <end position="256"/>
    </location>
</feature>
<feature type="compositionally biased region" description="Basic residues" evidence="5">
    <location>
        <begin position="612"/>
        <end position="623"/>
    </location>
</feature>
<feature type="compositionally biased region" description="Basic residues" evidence="5">
    <location>
        <begin position="683"/>
        <end position="700"/>
    </location>
</feature>
<feature type="binding site" evidence="4">
    <location>
        <position position="628"/>
    </location>
    <ligand>
        <name>Zn(2+)</name>
        <dbReference type="ChEBI" id="CHEBI:29105"/>
    </ligand>
</feature>
<feature type="binding site" evidence="4">
    <location>
        <position position="633"/>
    </location>
    <ligand>
        <name>Zn(2+)</name>
        <dbReference type="ChEBI" id="CHEBI:29105"/>
    </ligand>
</feature>
<feature type="binding site" evidence="4">
    <location>
        <position position="646"/>
    </location>
    <ligand>
        <name>Zn(2+)</name>
        <dbReference type="ChEBI" id="CHEBI:29105"/>
    </ligand>
</feature>
<feature type="binding site" evidence="4">
    <location>
        <position position="652"/>
    </location>
    <ligand>
        <name>Zn(2+)</name>
        <dbReference type="ChEBI" id="CHEBI:29105"/>
    </ligand>
</feature>
<feature type="site" description="Mediates recognition of monomethylated and dimethylated peptides" evidence="1">
    <location>
        <position position="429"/>
    </location>
</feature>
<feature type="site" description="Positioned at the entrance of MBT 2 and is required for recognition of monomethylated and dimethylated peptides" evidence="1">
    <location>
        <position position="432"/>
    </location>
</feature>
<feature type="modified residue" description="Phosphoserine" evidence="2">
    <location>
        <position position="136"/>
    </location>
</feature>
<dbReference type="EMBL" id="CH474005">
    <property type="protein sequence ID" value="EDL96599.1"/>
    <property type="molecule type" value="Genomic_DNA"/>
</dbReference>
<dbReference type="RefSeq" id="NP_001406545.1">
    <property type="nucleotide sequence ID" value="NM_001419616.1"/>
</dbReference>
<dbReference type="SMR" id="D3ZWK4"/>
<dbReference type="FunCoup" id="D3ZWK4">
    <property type="interactions" value="1089"/>
</dbReference>
<dbReference type="STRING" id="10116.ENSRNOP00000049326"/>
<dbReference type="GlyGen" id="D3ZWK4">
    <property type="glycosylation" value="2 sites"/>
</dbReference>
<dbReference type="PhosphoSitePlus" id="D3ZWK4"/>
<dbReference type="PaxDb" id="10116-ENSRNOP00000049326"/>
<dbReference type="Ensembl" id="ENSRNOT00000045677.6">
    <property type="protein sequence ID" value="ENSRNOP00000049326.3"/>
    <property type="gene ID" value="ENSRNOG00000007044.8"/>
</dbReference>
<dbReference type="GeneID" id="311613"/>
<dbReference type="AGR" id="RGD:1307316"/>
<dbReference type="RGD" id="1307316">
    <property type="gene designation" value="L3mbtl1"/>
</dbReference>
<dbReference type="eggNOG" id="KOG3766">
    <property type="taxonomic scope" value="Eukaryota"/>
</dbReference>
<dbReference type="GeneTree" id="ENSGT00940000159708"/>
<dbReference type="HOGENOM" id="CLU_004064_0_0_1"/>
<dbReference type="InParanoid" id="D3ZWK4"/>
<dbReference type="OMA" id="DIHAAGW"/>
<dbReference type="OrthoDB" id="8188861at2759"/>
<dbReference type="PhylomeDB" id="D3ZWK4"/>
<dbReference type="TreeFam" id="TF316498"/>
<dbReference type="Reactome" id="R-RNO-6804760">
    <property type="pathway name" value="Regulation of TP53 Activity through Methylation"/>
</dbReference>
<dbReference type="PRO" id="PR:D3ZWK4"/>
<dbReference type="Proteomes" id="UP000002494">
    <property type="component" value="Chromosome 3"/>
</dbReference>
<dbReference type="Proteomes" id="UP000234681">
    <property type="component" value="Chromosome 3"/>
</dbReference>
<dbReference type="Bgee" id="ENSRNOG00000007044">
    <property type="expression patterns" value="Expressed in frontal cortex and 4 other cell types or tissues"/>
</dbReference>
<dbReference type="ExpressionAtlas" id="D3ZWK4">
    <property type="expression patterns" value="baseline and differential"/>
</dbReference>
<dbReference type="GO" id="GO:0000785">
    <property type="term" value="C:chromatin"/>
    <property type="evidence" value="ECO:0000266"/>
    <property type="project" value="RGD"/>
</dbReference>
<dbReference type="GO" id="GO:0061793">
    <property type="term" value="C:chromatin lock complex"/>
    <property type="evidence" value="ECO:0000266"/>
    <property type="project" value="RGD"/>
</dbReference>
<dbReference type="GO" id="GO:0000793">
    <property type="term" value="C:condensed chromosome"/>
    <property type="evidence" value="ECO:0000266"/>
    <property type="project" value="RGD"/>
</dbReference>
<dbReference type="GO" id="GO:0005654">
    <property type="term" value="C:nucleoplasm"/>
    <property type="evidence" value="ECO:0000266"/>
    <property type="project" value="RGD"/>
</dbReference>
<dbReference type="GO" id="GO:0005634">
    <property type="term" value="C:nucleus"/>
    <property type="evidence" value="ECO:0000266"/>
    <property type="project" value="RGD"/>
</dbReference>
<dbReference type="GO" id="GO:0003682">
    <property type="term" value="F:chromatin binding"/>
    <property type="evidence" value="ECO:0000266"/>
    <property type="project" value="RGD"/>
</dbReference>
<dbReference type="GO" id="GO:0042393">
    <property type="term" value="F:histone binding"/>
    <property type="evidence" value="ECO:0000266"/>
    <property type="project" value="RGD"/>
</dbReference>
<dbReference type="GO" id="GO:0140005">
    <property type="term" value="F:histone H4K20me2 reader activity"/>
    <property type="evidence" value="ECO:0000250"/>
    <property type="project" value="UniProtKB"/>
</dbReference>
<dbReference type="GO" id="GO:0042802">
    <property type="term" value="F:identical protein binding"/>
    <property type="evidence" value="ECO:0000266"/>
    <property type="project" value="RGD"/>
</dbReference>
<dbReference type="GO" id="GO:0035064">
    <property type="term" value="F:methylated histone binding"/>
    <property type="evidence" value="ECO:0000266"/>
    <property type="project" value="RGD"/>
</dbReference>
<dbReference type="GO" id="GO:0031491">
    <property type="term" value="F:nucleosome binding"/>
    <property type="evidence" value="ECO:0000266"/>
    <property type="project" value="RGD"/>
</dbReference>
<dbReference type="GO" id="GO:0032093">
    <property type="term" value="F:SAM domain binding"/>
    <property type="evidence" value="ECO:0000266"/>
    <property type="project" value="RGD"/>
</dbReference>
<dbReference type="GO" id="GO:0008270">
    <property type="term" value="F:zinc ion binding"/>
    <property type="evidence" value="ECO:0007669"/>
    <property type="project" value="UniProtKB-KW"/>
</dbReference>
<dbReference type="GO" id="GO:0006325">
    <property type="term" value="P:chromatin organization"/>
    <property type="evidence" value="ECO:0000266"/>
    <property type="project" value="RGD"/>
</dbReference>
<dbReference type="GO" id="GO:0030097">
    <property type="term" value="P:hemopoiesis"/>
    <property type="evidence" value="ECO:0000266"/>
    <property type="project" value="RGD"/>
</dbReference>
<dbReference type="GO" id="GO:0031507">
    <property type="term" value="P:heterochromatin formation"/>
    <property type="evidence" value="ECO:0000266"/>
    <property type="project" value="RGD"/>
</dbReference>
<dbReference type="GO" id="GO:0045892">
    <property type="term" value="P:negative regulation of DNA-templated transcription"/>
    <property type="evidence" value="ECO:0000266"/>
    <property type="project" value="RGD"/>
</dbReference>
<dbReference type="GO" id="GO:0045652">
    <property type="term" value="P:regulation of megakaryocyte differentiation"/>
    <property type="evidence" value="ECO:0000266"/>
    <property type="project" value="RGD"/>
</dbReference>
<dbReference type="GO" id="GO:0007088">
    <property type="term" value="P:regulation of mitotic nuclear division"/>
    <property type="evidence" value="ECO:0000266"/>
    <property type="project" value="RGD"/>
</dbReference>
<dbReference type="GO" id="GO:0006357">
    <property type="term" value="P:regulation of transcription by RNA polymerase II"/>
    <property type="evidence" value="ECO:0007669"/>
    <property type="project" value="UniProtKB-ARBA"/>
</dbReference>
<dbReference type="CDD" id="cd20131">
    <property type="entry name" value="MBT_L3MBTL1_rpt1"/>
    <property type="match status" value="1"/>
</dbReference>
<dbReference type="CDD" id="cd20137">
    <property type="entry name" value="MBT_L3MBTL1_rpt3"/>
    <property type="match status" value="1"/>
</dbReference>
<dbReference type="CDD" id="cd09582">
    <property type="entry name" value="SAM_Scm-like-3MBT3_4"/>
    <property type="match status" value="1"/>
</dbReference>
<dbReference type="FunFam" id="2.30.30.140:FF:000007">
    <property type="entry name" value="Lethal(3)malignant brain tumor-like protein 1"/>
    <property type="match status" value="2"/>
</dbReference>
<dbReference type="FunFam" id="1.10.150.50:FF:000035">
    <property type="entry name" value="lethal(3)malignant brain tumor-like protein 3 isoform X2"/>
    <property type="match status" value="1"/>
</dbReference>
<dbReference type="FunFam" id="4.10.320.30:FF:000001">
    <property type="entry name" value="Myelin transcription factor 1-like, a"/>
    <property type="match status" value="1"/>
</dbReference>
<dbReference type="Gene3D" id="2.30.30.140">
    <property type="match status" value="3"/>
</dbReference>
<dbReference type="Gene3D" id="4.10.320.30">
    <property type="match status" value="1"/>
</dbReference>
<dbReference type="Gene3D" id="1.10.150.50">
    <property type="entry name" value="Transcription Factor, Ets-1"/>
    <property type="match status" value="1"/>
</dbReference>
<dbReference type="InterPro" id="IPR004092">
    <property type="entry name" value="Mbt"/>
</dbReference>
<dbReference type="InterPro" id="IPR047361">
    <property type="entry name" value="MBT_L3MBTL1_rpt1"/>
</dbReference>
<dbReference type="InterPro" id="IPR047362">
    <property type="entry name" value="MBT_L3MBTL1_rpt3"/>
</dbReference>
<dbReference type="InterPro" id="IPR050548">
    <property type="entry name" value="PcG_chromatin_remod_factors"/>
</dbReference>
<dbReference type="InterPro" id="IPR001660">
    <property type="entry name" value="SAM"/>
</dbReference>
<dbReference type="InterPro" id="IPR013761">
    <property type="entry name" value="SAM/pointed_sf"/>
</dbReference>
<dbReference type="InterPro" id="IPR002515">
    <property type="entry name" value="Znf_C2H2C"/>
</dbReference>
<dbReference type="InterPro" id="IPR036060">
    <property type="entry name" value="Znf_C2H2C_sf"/>
</dbReference>
<dbReference type="PANTHER" id="PTHR12247:SF69">
    <property type="entry name" value="LETHAL(3)MALIGNANT BRAIN TUMOR-LIKE PROTEIN 1"/>
    <property type="match status" value="1"/>
</dbReference>
<dbReference type="PANTHER" id="PTHR12247">
    <property type="entry name" value="POLYCOMB GROUP PROTEIN"/>
    <property type="match status" value="1"/>
</dbReference>
<dbReference type="Pfam" id="PF02820">
    <property type="entry name" value="MBT"/>
    <property type="match status" value="3"/>
</dbReference>
<dbReference type="Pfam" id="PF00536">
    <property type="entry name" value="SAM_1"/>
    <property type="match status" value="1"/>
</dbReference>
<dbReference type="Pfam" id="PF01530">
    <property type="entry name" value="zf-C2HC"/>
    <property type="match status" value="1"/>
</dbReference>
<dbReference type="SMART" id="SM00561">
    <property type="entry name" value="MBT"/>
    <property type="match status" value="3"/>
</dbReference>
<dbReference type="SMART" id="SM00454">
    <property type="entry name" value="SAM"/>
    <property type="match status" value="1"/>
</dbReference>
<dbReference type="SUPFAM" id="SSF103637">
    <property type="entry name" value="CCHHC domain"/>
    <property type="match status" value="1"/>
</dbReference>
<dbReference type="SUPFAM" id="SSF47769">
    <property type="entry name" value="SAM/Pointed domain"/>
    <property type="match status" value="1"/>
</dbReference>
<dbReference type="SUPFAM" id="SSF63748">
    <property type="entry name" value="Tudor/PWWP/MBT"/>
    <property type="match status" value="3"/>
</dbReference>
<dbReference type="PROSITE" id="PS51079">
    <property type="entry name" value="MBT"/>
    <property type="match status" value="3"/>
</dbReference>
<dbReference type="PROSITE" id="PS50105">
    <property type="entry name" value="SAM_DOMAIN"/>
    <property type="match status" value="1"/>
</dbReference>
<dbReference type="PROSITE" id="PS51802">
    <property type="entry name" value="ZF_CCHHC"/>
    <property type="match status" value="1"/>
</dbReference>
<keyword id="KW-0156">Chromatin regulator</keyword>
<keyword id="KW-0479">Metal-binding</keyword>
<keyword id="KW-0539">Nucleus</keyword>
<keyword id="KW-0597">Phosphoprotein</keyword>
<keyword id="KW-1185">Reference proteome</keyword>
<keyword id="KW-0677">Repeat</keyword>
<keyword id="KW-0678">Repressor</keyword>
<keyword id="KW-0804">Transcription</keyword>
<keyword id="KW-0805">Transcription regulation</keyword>
<keyword id="KW-0832">Ubl conjugation</keyword>
<keyword id="KW-0862">Zinc</keyword>
<keyword id="KW-0863">Zinc-finger</keyword>
<organism>
    <name type="scientific">Rattus norvegicus</name>
    <name type="common">Rat</name>
    <dbReference type="NCBI Taxonomy" id="10116"/>
    <lineage>
        <taxon>Eukaryota</taxon>
        <taxon>Metazoa</taxon>
        <taxon>Chordata</taxon>
        <taxon>Craniata</taxon>
        <taxon>Vertebrata</taxon>
        <taxon>Euteleostomi</taxon>
        <taxon>Mammalia</taxon>
        <taxon>Eutheria</taxon>
        <taxon>Euarchontoglires</taxon>
        <taxon>Glires</taxon>
        <taxon>Rodentia</taxon>
        <taxon>Myomorpha</taxon>
        <taxon>Muroidea</taxon>
        <taxon>Muridae</taxon>
        <taxon>Murinae</taxon>
        <taxon>Rattus</taxon>
    </lineage>
</organism>
<proteinExistence type="inferred from homology"/>
<evidence type="ECO:0000250" key="1"/>
<evidence type="ECO:0000250" key="2">
    <source>
        <dbReference type="UniProtKB" id="Q9Y468"/>
    </source>
</evidence>
<evidence type="ECO:0000255" key="3">
    <source>
        <dbReference type="PROSITE-ProRule" id="PRU00184"/>
    </source>
</evidence>
<evidence type="ECO:0000255" key="4">
    <source>
        <dbReference type="PROSITE-ProRule" id="PRU01143"/>
    </source>
</evidence>
<evidence type="ECO:0000256" key="5">
    <source>
        <dbReference type="SAM" id="MobiDB-lite"/>
    </source>
</evidence>
<name>LMBL1_RAT</name>
<gene>
    <name type="primary">L3mbtl1</name>
    <name type="synonym">L3mbt</name>
    <name type="synonym">L3mbtl</name>
</gene>
<protein>
    <recommendedName>
        <fullName>Lethal(3)malignant brain tumor-like protein 1</fullName>
        <shortName>H-l(3)mbt</shortName>
        <shortName>H-l(3)mbt protein</shortName>
        <shortName>L(3)mbt-like</shortName>
    </recommendedName>
    <alternativeName>
        <fullName>L(3)mbt protein homolog</fullName>
    </alternativeName>
</protein>
<sequence>MEGHSDMEIIRAVKGSATGEINVHLVARDSAGSHPHLPTTTFIIPTNAATLGLPSTALDVSYPREPVHVGAAERVAGSEPVTATILPQLSTGPGTNSTVRLLDWTGVSAPLAGSGMRFRINEYATQNMIEIERPRSPEQRHEGGTAGREADIQHPDVHKDPQEVIPQEPSVDAGSCKCQTCGPQQSIGLDVGSSGDRCPQPFQKRSVIVENSGCTVASELIKPMKKRKHKEYQSPSEESEPEAMKQGKGKDPDREPTPGTSENEEWSRSQLVSSEKKEGWSWESYLEEQKAVTAPVSLFQDSQAVTHNKNGFKLGMKLEGVDPQHPSMYFVLTVAEVCGYRLRLHFDGYSECHDFWVNANSPDIHPAGWFEKTGHKLQPPKGYKEEEFSWSQYLRSTKAQAAPKHLFVSQSHSPPPVGFQVGMKLEAVDRMNPSLVCVASVTDVVASRFLVHFDDWDDTYDYWCDASSPYIHPVGWCQKQGKPLTPPQDYPDPDSFCWEKYLEETGTSAVPTWAFKVRPPHSFLVNMKLEAVDRRNPALIRVASVEDVEDHRIKLHFDGWSHNYDFWIDADHPDIHPAGWCSKTGHPLEPPLRPRESSSASPGGCPPLSHRSPPHTKTSKYSFHHRKCPTPGCDGSGHVTGKFTAHHCLSGCPLAERNQSRLKAELSDSETTARKKNQSNLSPRKKPRHQGRIGRPPKYRKMPDEDFQALPPSVVHQSLFMSTLPTHADRPLSVCWEQHCKLLPGVAGISASAVSKWTIEEVFGFVQTLTGSEDQARLFKEEMIDGEAFLLLTQADIVKIMSVKLGPALKIYNAILMFKNNDDVFK</sequence>
<reference key="1">
    <citation type="submission" date="2005-09" db="EMBL/GenBank/DDBJ databases">
        <authorList>
            <person name="Mural R.J."/>
            <person name="Adams M.D."/>
            <person name="Myers E.W."/>
            <person name="Smith H.O."/>
            <person name="Venter J.C."/>
        </authorList>
    </citation>
    <scope>NUCLEOTIDE SEQUENCE [LARGE SCALE GENOMIC DNA]</scope>
    <source>
        <strain>Brown Norway</strain>
    </source>
</reference>
<comment type="function">
    <text evidence="1">Polycomb group (PcG) protein that specifically recognizes and binds mono- and dimethyllysine residues on target proteins, thereby acting as a 'reader' of a network of post-translational modifications. PcG proteins maintain the transcriptionally repressive state of genes: acts as a chromatin compaction factor by recognizing and binding mono- and dimethylated histone H1b/H1-4 at 'Lys-26' (H1bK26me1 and H1bK26me2) and histone H4 at 'Lys-20' (H4K20me1 and H4K20me2), leading to condense chromatin and repress transcription. Recognizes and binds p53/TP53 monomethylated at 'Lys-382', leading to repress p53/TP53-target genes. Also recognizes and binds RB1/RB monomethylated at 'Lys-860'. Participates in the ETV6-mediated repression. Probably plays a role in cell proliferation. Overexpression induces multinucleated cells, suggesting that it is required to accomplish normal mitosis (By similarity).</text>
</comment>
<comment type="subunit">
    <text evidence="1">Homodimer. Interacts with RB1/RB (when monomethylated at 'Lys-860'). Interacts with p53/TP53 (when monomethylated at 'Lys-382'). Interacts with CBX3, ETV6, KMT5A and VCP/p97 (By similarity).</text>
</comment>
<comment type="subcellular location">
    <subcellularLocation>
        <location evidence="1">Nucleus</location>
    </subcellularLocation>
    <text evidence="1">Excluded from the nucleolus. Does not colocalize with the PcG protein BMI1, suggesting that these two proteins do not belong to the same complex (By similarity).</text>
</comment>
<comment type="domain">
    <text evidence="1">The MBT repeat 2 specifically recognizes and binds monomethylated and dimethylated proteins. In contrast, it does not bind trimethylated proteins. The MBT repeat 1 does not bind methylated peptides but inserts a proline ring in a Pro-Ser-Ser/Thr sequence context (By similarity).</text>
</comment>
<comment type="PTM">
    <text evidence="1">Ubiquitinated in a VCP/p97-dependent way following DNA damage, leading to its removal from DNA damage sites, promoting accessibility of H4K20me2 mark for DNA repair protein TP53BP1, which is then recruited to DNA damage sites.</text>
</comment>
<accession>D3ZWK4</accession>
<accession>D4A6H6</accession>